<feature type="chain" id="PRO_0000332314" description="Zinc finger protein 729">
    <location>
        <begin position="1"/>
        <end position="1252"/>
    </location>
</feature>
<feature type="domain" description="KRAB" evidence="2">
    <location>
        <begin position="13"/>
        <end position="84"/>
    </location>
</feature>
<feature type="zinc finger region" description="C2H2-type 1" evidence="1">
    <location>
        <begin position="180"/>
        <end position="202"/>
    </location>
</feature>
<feature type="zinc finger region" description="C2H2-type 2; degenerate" evidence="1">
    <location>
        <begin position="208"/>
        <end position="230"/>
    </location>
</feature>
<feature type="zinc finger region" description="C2H2-type 3; degenerate" evidence="1">
    <location>
        <begin position="236"/>
        <end position="258"/>
    </location>
</feature>
<feature type="zinc finger region" description="C2H2-type 4" evidence="1">
    <location>
        <begin position="264"/>
        <end position="286"/>
    </location>
</feature>
<feature type="zinc finger region" description="C2H2-type 5" evidence="1">
    <location>
        <begin position="292"/>
        <end position="314"/>
    </location>
</feature>
<feature type="zinc finger region" description="C2H2-type 6" evidence="1">
    <location>
        <begin position="320"/>
        <end position="342"/>
    </location>
</feature>
<feature type="zinc finger region" description="C2H2-type 7; degenerate" evidence="1">
    <location>
        <begin position="348"/>
        <end position="370"/>
    </location>
</feature>
<feature type="zinc finger region" description="C2H2-type 8" evidence="1">
    <location>
        <begin position="376"/>
        <end position="398"/>
    </location>
</feature>
<feature type="zinc finger region" description="C2H2-type 9" evidence="1">
    <location>
        <begin position="404"/>
        <end position="426"/>
    </location>
</feature>
<feature type="zinc finger region" description="C2H2-type 10" evidence="1">
    <location>
        <begin position="432"/>
        <end position="454"/>
    </location>
</feature>
<feature type="zinc finger region" description="C2H2-type 11" evidence="1">
    <location>
        <begin position="460"/>
        <end position="482"/>
    </location>
</feature>
<feature type="zinc finger region" description="C2H2-type 12" evidence="1">
    <location>
        <begin position="488"/>
        <end position="510"/>
    </location>
</feature>
<feature type="zinc finger region" description="C2H2-type 13" evidence="1">
    <location>
        <begin position="516"/>
        <end position="538"/>
    </location>
</feature>
<feature type="zinc finger region" description="C2H2-type 14" evidence="1">
    <location>
        <begin position="544"/>
        <end position="566"/>
    </location>
</feature>
<feature type="zinc finger region" description="C2H2-type 15" evidence="1">
    <location>
        <begin position="572"/>
        <end position="594"/>
    </location>
</feature>
<feature type="zinc finger region" description="C2H2-type 16" evidence="1">
    <location>
        <begin position="600"/>
        <end position="622"/>
    </location>
</feature>
<feature type="zinc finger region" description="C2H2-type 17" evidence="1">
    <location>
        <begin position="628"/>
        <end position="650"/>
    </location>
</feature>
<feature type="zinc finger region" description="C2H2-type 18" evidence="1">
    <location>
        <begin position="656"/>
        <end position="678"/>
    </location>
</feature>
<feature type="zinc finger region" description="C2H2-type 19" evidence="1">
    <location>
        <begin position="684"/>
        <end position="706"/>
    </location>
</feature>
<feature type="zinc finger region" description="C2H2-type 20" evidence="1">
    <location>
        <begin position="712"/>
        <end position="734"/>
    </location>
</feature>
<feature type="zinc finger region" description="C2H2-type 21" evidence="1">
    <location>
        <begin position="740"/>
        <end position="762"/>
    </location>
</feature>
<feature type="zinc finger region" description="C2H2-type 22" evidence="1">
    <location>
        <begin position="768"/>
        <end position="790"/>
    </location>
</feature>
<feature type="zinc finger region" description="C2H2-type 23" evidence="1">
    <location>
        <begin position="796"/>
        <end position="818"/>
    </location>
</feature>
<feature type="zinc finger region" description="C2H2-type 24" evidence="1">
    <location>
        <begin position="824"/>
        <end position="846"/>
    </location>
</feature>
<feature type="zinc finger region" description="C2H2-type 25" evidence="1">
    <location>
        <begin position="852"/>
        <end position="874"/>
    </location>
</feature>
<feature type="zinc finger region" description="C2H2-type 26" evidence="1">
    <location>
        <begin position="880"/>
        <end position="902"/>
    </location>
</feature>
<feature type="zinc finger region" description="C2H2-type 27" evidence="1">
    <location>
        <begin position="908"/>
        <end position="930"/>
    </location>
</feature>
<feature type="zinc finger region" description="C2H2-type 28" evidence="1">
    <location>
        <begin position="936"/>
        <end position="958"/>
    </location>
</feature>
<feature type="zinc finger region" description="C2H2-type 29" evidence="1">
    <location>
        <begin position="964"/>
        <end position="986"/>
    </location>
</feature>
<feature type="zinc finger region" description="C2H2-type 30" evidence="1">
    <location>
        <begin position="992"/>
        <end position="1014"/>
    </location>
</feature>
<feature type="zinc finger region" description="C2H2-type 31" evidence="1">
    <location>
        <begin position="1020"/>
        <end position="1042"/>
    </location>
</feature>
<feature type="zinc finger region" description="C2H2-type 32" evidence="1">
    <location>
        <begin position="1048"/>
        <end position="1070"/>
    </location>
</feature>
<feature type="zinc finger region" description="C2H2-type 33" evidence="1">
    <location>
        <begin position="1076"/>
        <end position="1098"/>
    </location>
</feature>
<feature type="zinc finger region" description="C2H2-type 34" evidence="1">
    <location>
        <begin position="1104"/>
        <end position="1126"/>
    </location>
</feature>
<feature type="zinc finger region" description="C2H2-type 35" evidence="1">
    <location>
        <begin position="1132"/>
        <end position="1154"/>
    </location>
</feature>
<feature type="zinc finger region" description="C2H2-type 36" evidence="1">
    <location>
        <begin position="1160"/>
        <end position="1182"/>
    </location>
</feature>
<feature type="zinc finger region" description="C2H2-type 37" evidence="1">
    <location>
        <begin position="1188"/>
        <end position="1210"/>
    </location>
</feature>
<dbReference type="EMBL" id="AC011494">
    <property type="status" value="NOT_ANNOTATED_CDS"/>
    <property type="molecule type" value="Genomic_DNA"/>
</dbReference>
<dbReference type="EMBL" id="AC073539">
    <property type="status" value="NOT_ANNOTATED_CDS"/>
    <property type="molecule type" value="Genomic_DNA"/>
</dbReference>
<dbReference type="EMBL" id="BX956721">
    <property type="status" value="NOT_ANNOTATED_CDS"/>
    <property type="molecule type" value="mRNA"/>
</dbReference>
<dbReference type="CCDS" id="CCDS59368.1"/>
<dbReference type="RefSeq" id="NP_001229609.1">
    <property type="nucleotide sequence ID" value="NM_001242680.2"/>
</dbReference>
<dbReference type="SMR" id="A6NN14"/>
<dbReference type="BioGRID" id="938888">
    <property type="interactions" value="1"/>
</dbReference>
<dbReference type="IntAct" id="A6NN14">
    <property type="interactions" value="18"/>
</dbReference>
<dbReference type="STRING" id="9606.ENSP00000469582"/>
<dbReference type="iPTMnet" id="A6NN14"/>
<dbReference type="PhosphoSitePlus" id="A6NN14"/>
<dbReference type="BioMuta" id="ZNF729"/>
<dbReference type="jPOST" id="A6NN14"/>
<dbReference type="MassIVE" id="A6NN14"/>
<dbReference type="PaxDb" id="9606-ENSP00000469582"/>
<dbReference type="PeptideAtlas" id="A6NN14"/>
<dbReference type="ProteomicsDB" id="1578"/>
<dbReference type="Antibodypedia" id="69807">
    <property type="antibodies" value="49 antibodies from 7 providers"/>
</dbReference>
<dbReference type="DNASU" id="100287226"/>
<dbReference type="Ensembl" id="ENST00000601693.2">
    <property type="protein sequence ID" value="ENSP00000469582.1"/>
    <property type="gene ID" value="ENSG00000196350.9"/>
</dbReference>
<dbReference type="GeneID" id="100287226"/>
<dbReference type="KEGG" id="hsa:100287226"/>
<dbReference type="MANE-Select" id="ENST00000601693.2">
    <property type="protein sequence ID" value="ENSP00000469582.1"/>
    <property type="RefSeq nucleotide sequence ID" value="NM_001242680.2"/>
    <property type="RefSeq protein sequence ID" value="NP_001229609.1"/>
</dbReference>
<dbReference type="UCSC" id="uc021urs.2">
    <property type="organism name" value="human"/>
</dbReference>
<dbReference type="AGR" id="HGNC:32464"/>
<dbReference type="CTD" id="100287226"/>
<dbReference type="DisGeNET" id="100287226"/>
<dbReference type="GeneCards" id="ZNF729"/>
<dbReference type="HGNC" id="HGNC:32464">
    <property type="gene designation" value="ZNF729"/>
</dbReference>
<dbReference type="HPA" id="ENSG00000196350">
    <property type="expression patterns" value="Tissue enriched (testis)"/>
</dbReference>
<dbReference type="neXtProt" id="NX_A6NN14"/>
<dbReference type="OpenTargets" id="ENSG00000196350"/>
<dbReference type="VEuPathDB" id="HostDB:ENSG00000196350"/>
<dbReference type="eggNOG" id="KOG1721">
    <property type="taxonomic scope" value="Eukaryota"/>
</dbReference>
<dbReference type="GeneTree" id="ENSGT00940000163381"/>
<dbReference type="HOGENOM" id="CLU_002678_17_1_1"/>
<dbReference type="InParanoid" id="A6NN14"/>
<dbReference type="OMA" id="WPDQSTK"/>
<dbReference type="OrthoDB" id="9411774at2759"/>
<dbReference type="PAN-GO" id="A6NN14">
    <property type="GO annotations" value="4 GO annotations based on evolutionary models"/>
</dbReference>
<dbReference type="PhylomeDB" id="A6NN14"/>
<dbReference type="TreeFam" id="TF343410"/>
<dbReference type="PathwayCommons" id="A6NN14"/>
<dbReference type="Reactome" id="R-HSA-212436">
    <property type="pathway name" value="Generic Transcription Pathway"/>
</dbReference>
<dbReference type="BioGRID-ORCS" id="100287226">
    <property type="hits" value="19 hits in 1049 CRISPR screens"/>
</dbReference>
<dbReference type="GenomeRNAi" id="100287226"/>
<dbReference type="Pharos" id="A6NN14">
    <property type="development level" value="Tdark"/>
</dbReference>
<dbReference type="PRO" id="PR:A6NN14"/>
<dbReference type="Proteomes" id="UP000005640">
    <property type="component" value="Chromosome 19"/>
</dbReference>
<dbReference type="RNAct" id="A6NN14">
    <property type="molecule type" value="protein"/>
</dbReference>
<dbReference type="Bgee" id="ENSG00000196350">
    <property type="expression patterns" value="Expressed in primordial germ cell in gonad and 5 other cell types or tissues"/>
</dbReference>
<dbReference type="GO" id="GO:0005634">
    <property type="term" value="C:nucleus"/>
    <property type="evidence" value="ECO:0000318"/>
    <property type="project" value="GO_Central"/>
</dbReference>
<dbReference type="GO" id="GO:0003677">
    <property type="term" value="F:DNA binding"/>
    <property type="evidence" value="ECO:0007669"/>
    <property type="project" value="UniProtKB-KW"/>
</dbReference>
<dbReference type="GO" id="GO:0008270">
    <property type="term" value="F:zinc ion binding"/>
    <property type="evidence" value="ECO:0007669"/>
    <property type="project" value="UniProtKB-KW"/>
</dbReference>
<dbReference type="GO" id="GO:0006357">
    <property type="term" value="P:regulation of transcription by RNA polymerase II"/>
    <property type="evidence" value="ECO:0000318"/>
    <property type="project" value="GO_Central"/>
</dbReference>
<dbReference type="CDD" id="cd07765">
    <property type="entry name" value="KRAB_A-box"/>
    <property type="match status" value="1"/>
</dbReference>
<dbReference type="FunFam" id="3.30.160.60:FF:003723">
    <property type="match status" value="1"/>
</dbReference>
<dbReference type="FunFam" id="3.30.160.60:FF:001956">
    <property type="entry name" value="ZFP37 zinc finger protein"/>
    <property type="match status" value="1"/>
</dbReference>
<dbReference type="FunFam" id="3.30.160.60:FF:000005">
    <property type="entry name" value="Zinc finger protein 14 homolog"/>
    <property type="match status" value="1"/>
</dbReference>
<dbReference type="FunFam" id="3.30.160.60:FF:000524">
    <property type="entry name" value="Zinc finger protein 155"/>
    <property type="match status" value="2"/>
</dbReference>
<dbReference type="FunFam" id="3.30.160.60:FF:000374">
    <property type="entry name" value="Zinc finger protein 208"/>
    <property type="match status" value="14"/>
</dbReference>
<dbReference type="FunFam" id="3.30.160.60:FF:000034">
    <property type="entry name" value="zinc finger protein 25"/>
    <property type="match status" value="6"/>
</dbReference>
<dbReference type="FunFam" id="3.30.160.60:FF:001868">
    <property type="entry name" value="Zinc finger protein 264"/>
    <property type="match status" value="4"/>
</dbReference>
<dbReference type="FunFam" id="3.30.160.60:FF:000016">
    <property type="entry name" value="zinc finger protein 37 homolog"/>
    <property type="match status" value="1"/>
</dbReference>
<dbReference type="FunFam" id="3.30.160.60:FF:000120">
    <property type="entry name" value="Zinc finger protein 430"/>
    <property type="match status" value="1"/>
</dbReference>
<dbReference type="FunFam" id="3.30.160.60:FF:002448">
    <property type="entry name" value="Zinc finger protein 430"/>
    <property type="match status" value="1"/>
</dbReference>
<dbReference type="FunFam" id="3.30.160.60:FF:002249">
    <property type="entry name" value="Zinc finger protein 560"/>
    <property type="match status" value="1"/>
</dbReference>
<dbReference type="FunFam" id="3.30.160.60:FF:000307">
    <property type="entry name" value="Zinc finger protein ZFP69 isoform 1"/>
    <property type="match status" value="4"/>
</dbReference>
<dbReference type="Gene3D" id="6.10.140.140">
    <property type="match status" value="1"/>
</dbReference>
<dbReference type="Gene3D" id="3.30.160.60">
    <property type="entry name" value="Classic Zinc Finger"/>
    <property type="match status" value="38"/>
</dbReference>
<dbReference type="InterPro" id="IPR050589">
    <property type="entry name" value="Ikaros_C2H2-ZF"/>
</dbReference>
<dbReference type="InterPro" id="IPR001909">
    <property type="entry name" value="KRAB"/>
</dbReference>
<dbReference type="InterPro" id="IPR036051">
    <property type="entry name" value="KRAB_dom_sf"/>
</dbReference>
<dbReference type="InterPro" id="IPR036236">
    <property type="entry name" value="Znf_C2H2_sf"/>
</dbReference>
<dbReference type="InterPro" id="IPR013087">
    <property type="entry name" value="Znf_C2H2_type"/>
</dbReference>
<dbReference type="PANTHER" id="PTHR24404">
    <property type="entry name" value="ZINC FINGER PROTEIN"/>
    <property type="match status" value="1"/>
</dbReference>
<dbReference type="PANTHER" id="PTHR24404:SF100">
    <property type="entry name" value="ZINC FINGER PROTEIN 501"/>
    <property type="match status" value="1"/>
</dbReference>
<dbReference type="Pfam" id="PF01352">
    <property type="entry name" value="KRAB"/>
    <property type="match status" value="1"/>
</dbReference>
<dbReference type="Pfam" id="PF00096">
    <property type="entry name" value="zf-C2H2"/>
    <property type="match status" value="32"/>
</dbReference>
<dbReference type="Pfam" id="PF13912">
    <property type="entry name" value="zf-C2H2_6"/>
    <property type="match status" value="1"/>
</dbReference>
<dbReference type="SMART" id="SM00349">
    <property type="entry name" value="KRAB"/>
    <property type="match status" value="1"/>
</dbReference>
<dbReference type="SMART" id="SM00355">
    <property type="entry name" value="ZnF_C2H2"/>
    <property type="match status" value="37"/>
</dbReference>
<dbReference type="SUPFAM" id="SSF57667">
    <property type="entry name" value="beta-beta-alpha zinc fingers"/>
    <property type="match status" value="20"/>
</dbReference>
<dbReference type="SUPFAM" id="SSF109640">
    <property type="entry name" value="KRAB domain (Kruppel-associated box)"/>
    <property type="match status" value="1"/>
</dbReference>
<dbReference type="PROSITE" id="PS50805">
    <property type="entry name" value="KRAB"/>
    <property type="match status" value="1"/>
</dbReference>
<dbReference type="PROSITE" id="PS00028">
    <property type="entry name" value="ZINC_FINGER_C2H2_1"/>
    <property type="match status" value="34"/>
</dbReference>
<dbReference type="PROSITE" id="PS50157">
    <property type="entry name" value="ZINC_FINGER_C2H2_2"/>
    <property type="match status" value="37"/>
</dbReference>
<protein>
    <recommendedName>
        <fullName>Zinc finger protein 729</fullName>
    </recommendedName>
</protein>
<name>ZN729_HUMAN</name>
<sequence>MPGAPGSLEMGPLTFRDVTIEFSLEEWQCLDTVQQNLYRDVMLENYRNLVFLGMAVFKPDLITCLKQGKEPWNMKRHEMVTKPPVMRSHFTQDLWPDQSTKDSFQEVILRTYARCGHKNLRLRKDCKSANEGKMHKEGYNKLNQCRTATQRKIFQCNKHMKVFHKYSNRNKVRHTKKKTFKCIKCSKSFFMLSCLIRHKRIHIRQNIYKCEERGKAFKSFSTLTKHKIIHTEDKPYKYKKCGNAFKFSSTFTKHKRIHTGETPFRCEECGKAFNQSSNLTDHKRIHTGEKTYKCEECGKAFKGSSNFNAHKVIHTAEKPYKCEDCGKTFNHFSALRKHKIIHTGKKPYKREECGKAFSQSSTLRKHEIIHTGEKPYKCEECGKAFKWSSKLTVHKVVHTGEKPYKCEECGKAFSQFSTLKKHKIIHTGKKPYKCEECGKAFNSSSTLMKHKIIHTGEKPYKCEECGKAFRQSSHLTRHKAIHTGEKPYKCEECGKAFNHFSDLRRHKIIHTGKKPYKCEECGKAFSQSSTLRNHQIIHTGEKPYKCEECGKAFKWSSKLTVHKVIHTGEKPCKCEECGKAFKHFSALRKHKVIHTREKLYKCEECGKAFNNSSILAKHKIIHTGKKPYKCEECGKAFRQSSHLTRHKAIHTGEKPYKCEECGKAFSHFSALRRHKIIHTGKKPYKCEECGKAFSHFSALRRHKIIHTGEKPYKCEECGKAFKWSSKLTVHKVIHTAEKPCKCEECGKSFKHFSALRKHKVIHTREKLYKCEECVKAFNSFSALMKHKVIHTGEKPYKCEECGKAFKWSSKLTVHKVIHTGEKPCKCEECGKAFKHFSALRKHKVIHTGKKPYKCEECGKAFSQSSSLRKHEIIHSGEKPYKCEECGKAFKWLSKLTVHKVIHTAEKPCKCEECGKAFKHFSALRKHKIIHTGKKPYKCEECGKAFNDSSTLMKHKIIHTGKKPYKCAECGKAFKQSSHLTRHKAIHTGEKPYKCEECGKDFNNSSTLKKHKLIHTREKLYKCEECVKAFNNFSALMKHKIIHTGEKPYKCEECGKAFKWSSKLTEHKVIHTGEKPCKCEECDKAFKHFSALRKHKVIHTGKKPYQCDECGKAFNNSSTLTKHKIIHTGEKPYKCEECGKAFSQSSILTKHKIIHSVEKPYKCEECGKAFNQSSHLTRHKTIHTGEKPYKCEECGKAFIQCSYLIRHKTIHTREKPTNVKKVPKLLSNPHTLLDKTIHTGEKPYKCEECAKAF</sequence>
<keyword id="KW-0238">DNA-binding</keyword>
<keyword id="KW-0479">Metal-binding</keyword>
<keyword id="KW-0539">Nucleus</keyword>
<keyword id="KW-1267">Proteomics identification</keyword>
<keyword id="KW-1185">Reference proteome</keyword>
<keyword id="KW-0677">Repeat</keyword>
<keyword id="KW-0804">Transcription</keyword>
<keyword id="KW-0805">Transcription regulation</keyword>
<keyword id="KW-0862">Zinc</keyword>
<keyword id="KW-0863">Zinc-finger</keyword>
<organism>
    <name type="scientific">Homo sapiens</name>
    <name type="common">Human</name>
    <dbReference type="NCBI Taxonomy" id="9606"/>
    <lineage>
        <taxon>Eukaryota</taxon>
        <taxon>Metazoa</taxon>
        <taxon>Chordata</taxon>
        <taxon>Craniata</taxon>
        <taxon>Vertebrata</taxon>
        <taxon>Euteleostomi</taxon>
        <taxon>Mammalia</taxon>
        <taxon>Eutheria</taxon>
        <taxon>Euarchontoglires</taxon>
        <taxon>Primates</taxon>
        <taxon>Haplorrhini</taxon>
        <taxon>Catarrhini</taxon>
        <taxon>Hominidae</taxon>
        <taxon>Homo</taxon>
    </lineage>
</organism>
<evidence type="ECO:0000255" key="1">
    <source>
        <dbReference type="PROSITE-ProRule" id="PRU00042"/>
    </source>
</evidence>
<evidence type="ECO:0000255" key="2">
    <source>
        <dbReference type="PROSITE-ProRule" id="PRU00119"/>
    </source>
</evidence>
<evidence type="ECO:0000305" key="3"/>
<accession>A6NN14</accession>
<accession>M0QY45</accession>
<reference key="1">
    <citation type="journal article" date="2004" name="Nature">
        <title>The DNA sequence and biology of human chromosome 19.</title>
        <authorList>
            <person name="Grimwood J."/>
            <person name="Gordon L.A."/>
            <person name="Olsen A.S."/>
            <person name="Terry A."/>
            <person name="Schmutz J."/>
            <person name="Lamerdin J.E."/>
            <person name="Hellsten U."/>
            <person name="Goodstein D."/>
            <person name="Couronne O."/>
            <person name="Tran-Gyamfi M."/>
            <person name="Aerts A."/>
            <person name="Altherr M."/>
            <person name="Ashworth L."/>
            <person name="Bajorek E."/>
            <person name="Black S."/>
            <person name="Branscomb E."/>
            <person name="Caenepeel S."/>
            <person name="Carrano A.V."/>
            <person name="Caoile C."/>
            <person name="Chan Y.M."/>
            <person name="Christensen M."/>
            <person name="Cleland C.A."/>
            <person name="Copeland A."/>
            <person name="Dalin E."/>
            <person name="Dehal P."/>
            <person name="Denys M."/>
            <person name="Detter J.C."/>
            <person name="Escobar J."/>
            <person name="Flowers D."/>
            <person name="Fotopulos D."/>
            <person name="Garcia C."/>
            <person name="Georgescu A.M."/>
            <person name="Glavina T."/>
            <person name="Gomez M."/>
            <person name="Gonzales E."/>
            <person name="Groza M."/>
            <person name="Hammon N."/>
            <person name="Hawkins T."/>
            <person name="Haydu L."/>
            <person name="Ho I."/>
            <person name="Huang W."/>
            <person name="Israni S."/>
            <person name="Jett J."/>
            <person name="Kadner K."/>
            <person name="Kimball H."/>
            <person name="Kobayashi A."/>
            <person name="Larionov V."/>
            <person name="Leem S.-H."/>
            <person name="Lopez F."/>
            <person name="Lou Y."/>
            <person name="Lowry S."/>
            <person name="Malfatti S."/>
            <person name="Martinez D."/>
            <person name="McCready P.M."/>
            <person name="Medina C."/>
            <person name="Morgan J."/>
            <person name="Nelson K."/>
            <person name="Nolan M."/>
            <person name="Ovcharenko I."/>
            <person name="Pitluck S."/>
            <person name="Pollard M."/>
            <person name="Popkie A.P."/>
            <person name="Predki P."/>
            <person name="Quan G."/>
            <person name="Ramirez L."/>
            <person name="Rash S."/>
            <person name="Retterer J."/>
            <person name="Rodriguez A."/>
            <person name="Rogers S."/>
            <person name="Salamov A."/>
            <person name="Salazar A."/>
            <person name="She X."/>
            <person name="Smith D."/>
            <person name="Slezak T."/>
            <person name="Solovyev V."/>
            <person name="Thayer N."/>
            <person name="Tice H."/>
            <person name="Tsai M."/>
            <person name="Ustaszewska A."/>
            <person name="Vo N."/>
            <person name="Wagner M."/>
            <person name="Wheeler J."/>
            <person name="Wu K."/>
            <person name="Xie G."/>
            <person name="Yang J."/>
            <person name="Dubchak I."/>
            <person name="Furey T.S."/>
            <person name="DeJong P."/>
            <person name="Dickson M."/>
            <person name="Gordon D."/>
            <person name="Eichler E.E."/>
            <person name="Pennacchio L.A."/>
            <person name="Richardson P."/>
            <person name="Stubbs L."/>
            <person name="Rokhsar D.S."/>
            <person name="Myers R.M."/>
            <person name="Rubin E.M."/>
            <person name="Lucas S.M."/>
        </authorList>
    </citation>
    <scope>NUCLEOTIDE SEQUENCE [LARGE SCALE GENOMIC DNA]</scope>
</reference>
<reference key="2">
    <citation type="journal article" date="2007" name="BMC Genomics">
        <title>The full-ORF clone resource of the German cDNA consortium.</title>
        <authorList>
            <person name="Bechtel S."/>
            <person name="Rosenfelder H."/>
            <person name="Duda A."/>
            <person name="Schmidt C.P."/>
            <person name="Ernst U."/>
            <person name="Wellenreuther R."/>
            <person name="Mehrle A."/>
            <person name="Schuster C."/>
            <person name="Bahr A."/>
            <person name="Bloecker H."/>
            <person name="Heubner D."/>
            <person name="Hoerlein A."/>
            <person name="Michel G."/>
            <person name="Wedler H."/>
            <person name="Koehrer K."/>
            <person name="Ottenwaelder B."/>
            <person name="Poustka A."/>
            <person name="Wiemann S."/>
            <person name="Schupp I."/>
        </authorList>
    </citation>
    <scope>NUCLEOTIDE SEQUENCE [LARGE SCALE MRNA] OF 1-100</scope>
</reference>
<proteinExistence type="evidence at protein level"/>
<gene>
    <name type="primary">ZNF729</name>
</gene>
<comment type="function">
    <text>May be involved in transcriptional regulation.</text>
</comment>
<comment type="subcellular location">
    <subcellularLocation>
        <location evidence="3">Nucleus</location>
    </subcellularLocation>
</comment>
<comment type="similarity">
    <text evidence="3">Belongs to the krueppel C2H2-type zinc-finger protein family.</text>
</comment>